<name>SYL_MARN8</name>
<accession>A1U4A0</accession>
<reference key="1">
    <citation type="journal article" date="2011" name="Appl. Environ. Microbiol.">
        <title>Genomic potential of Marinobacter aquaeolei, a biogeochemical 'opportunitroph'.</title>
        <authorList>
            <person name="Singer E."/>
            <person name="Webb E.A."/>
            <person name="Nelson W.C."/>
            <person name="Heidelberg J.F."/>
            <person name="Ivanova N."/>
            <person name="Pati A."/>
            <person name="Edwards K.J."/>
        </authorList>
    </citation>
    <scope>NUCLEOTIDE SEQUENCE [LARGE SCALE GENOMIC DNA]</scope>
    <source>
        <strain>ATCC 700491 / DSM 11845 / VT8</strain>
    </source>
</reference>
<feature type="chain" id="PRO_0000334770" description="Leucine--tRNA ligase">
    <location>
        <begin position="1"/>
        <end position="861"/>
    </location>
</feature>
<feature type="short sequence motif" description="'HIGH' region">
    <location>
        <begin position="42"/>
        <end position="52"/>
    </location>
</feature>
<feature type="short sequence motif" description="'KMSKS' region">
    <location>
        <begin position="620"/>
        <end position="624"/>
    </location>
</feature>
<feature type="binding site" evidence="1">
    <location>
        <position position="623"/>
    </location>
    <ligand>
        <name>ATP</name>
        <dbReference type="ChEBI" id="CHEBI:30616"/>
    </ligand>
</feature>
<dbReference type="EC" id="6.1.1.4" evidence="1"/>
<dbReference type="EMBL" id="CP000514">
    <property type="protein sequence ID" value="ABM19819.1"/>
    <property type="status" value="ALT_INIT"/>
    <property type="molecule type" value="Genomic_DNA"/>
</dbReference>
<dbReference type="RefSeq" id="WP_041656989.1">
    <property type="nucleotide sequence ID" value="NC_008740.1"/>
</dbReference>
<dbReference type="SMR" id="A1U4A0"/>
<dbReference type="STRING" id="351348.Maqu_2744"/>
<dbReference type="KEGG" id="maq:Maqu_2744"/>
<dbReference type="eggNOG" id="COG0495">
    <property type="taxonomic scope" value="Bacteria"/>
</dbReference>
<dbReference type="HOGENOM" id="CLU_004427_0_0_6"/>
<dbReference type="OrthoDB" id="9810365at2"/>
<dbReference type="Proteomes" id="UP000000998">
    <property type="component" value="Chromosome"/>
</dbReference>
<dbReference type="GO" id="GO:0005829">
    <property type="term" value="C:cytosol"/>
    <property type="evidence" value="ECO:0007669"/>
    <property type="project" value="TreeGrafter"/>
</dbReference>
<dbReference type="GO" id="GO:0002161">
    <property type="term" value="F:aminoacyl-tRNA deacylase activity"/>
    <property type="evidence" value="ECO:0007669"/>
    <property type="project" value="InterPro"/>
</dbReference>
<dbReference type="GO" id="GO:0005524">
    <property type="term" value="F:ATP binding"/>
    <property type="evidence" value="ECO:0007669"/>
    <property type="project" value="UniProtKB-UniRule"/>
</dbReference>
<dbReference type="GO" id="GO:0004823">
    <property type="term" value="F:leucine-tRNA ligase activity"/>
    <property type="evidence" value="ECO:0007669"/>
    <property type="project" value="UniProtKB-UniRule"/>
</dbReference>
<dbReference type="GO" id="GO:0006429">
    <property type="term" value="P:leucyl-tRNA aminoacylation"/>
    <property type="evidence" value="ECO:0007669"/>
    <property type="project" value="UniProtKB-UniRule"/>
</dbReference>
<dbReference type="CDD" id="cd07958">
    <property type="entry name" value="Anticodon_Ia_Leu_BEm"/>
    <property type="match status" value="1"/>
</dbReference>
<dbReference type="CDD" id="cd00812">
    <property type="entry name" value="LeuRS_core"/>
    <property type="match status" value="1"/>
</dbReference>
<dbReference type="FunFam" id="1.10.730.10:FF:000003">
    <property type="entry name" value="Leucine--tRNA ligase"/>
    <property type="match status" value="1"/>
</dbReference>
<dbReference type="FunFam" id="2.20.28.290:FF:000001">
    <property type="entry name" value="Leucine--tRNA ligase"/>
    <property type="match status" value="1"/>
</dbReference>
<dbReference type="FunFam" id="3.10.20.590:FF:000001">
    <property type="entry name" value="Leucine--tRNA ligase"/>
    <property type="match status" value="1"/>
</dbReference>
<dbReference type="FunFam" id="3.40.50.620:FF:000051">
    <property type="entry name" value="Leucine--tRNA ligase"/>
    <property type="match status" value="1"/>
</dbReference>
<dbReference type="FunFam" id="3.40.50.620:FF:000395">
    <property type="entry name" value="Leucine--tRNA ligase"/>
    <property type="match status" value="1"/>
</dbReference>
<dbReference type="FunFam" id="3.90.740.10:FF:000012">
    <property type="entry name" value="Leucine--tRNA ligase"/>
    <property type="match status" value="1"/>
</dbReference>
<dbReference type="Gene3D" id="2.20.28.290">
    <property type="match status" value="1"/>
</dbReference>
<dbReference type="Gene3D" id="3.10.20.590">
    <property type="match status" value="1"/>
</dbReference>
<dbReference type="Gene3D" id="3.40.50.620">
    <property type="entry name" value="HUPs"/>
    <property type="match status" value="1"/>
</dbReference>
<dbReference type="Gene3D" id="1.10.730.10">
    <property type="entry name" value="Isoleucyl-tRNA Synthetase, Domain 1"/>
    <property type="match status" value="2"/>
</dbReference>
<dbReference type="Gene3D" id="3.90.740.10">
    <property type="entry name" value="Valyl/Leucyl/Isoleucyl-tRNA synthetase, editing domain"/>
    <property type="match status" value="1"/>
</dbReference>
<dbReference type="HAMAP" id="MF_00049_B">
    <property type="entry name" value="Leu_tRNA_synth_B"/>
    <property type="match status" value="1"/>
</dbReference>
<dbReference type="InterPro" id="IPR001412">
    <property type="entry name" value="aa-tRNA-synth_I_CS"/>
</dbReference>
<dbReference type="InterPro" id="IPR002300">
    <property type="entry name" value="aa-tRNA-synth_Ia"/>
</dbReference>
<dbReference type="InterPro" id="IPR002302">
    <property type="entry name" value="Leu-tRNA-ligase"/>
</dbReference>
<dbReference type="InterPro" id="IPR025709">
    <property type="entry name" value="Leu_tRNA-synth_edit"/>
</dbReference>
<dbReference type="InterPro" id="IPR013155">
    <property type="entry name" value="M/V/L/I-tRNA-synth_anticd-bd"/>
</dbReference>
<dbReference type="InterPro" id="IPR015413">
    <property type="entry name" value="Methionyl/Leucyl_tRNA_Synth"/>
</dbReference>
<dbReference type="InterPro" id="IPR014729">
    <property type="entry name" value="Rossmann-like_a/b/a_fold"/>
</dbReference>
<dbReference type="InterPro" id="IPR009080">
    <property type="entry name" value="tRNAsynth_Ia_anticodon-bd"/>
</dbReference>
<dbReference type="InterPro" id="IPR009008">
    <property type="entry name" value="Val/Leu/Ile-tRNA-synth_edit"/>
</dbReference>
<dbReference type="NCBIfam" id="TIGR00396">
    <property type="entry name" value="leuS_bact"/>
    <property type="match status" value="1"/>
</dbReference>
<dbReference type="PANTHER" id="PTHR43740:SF2">
    <property type="entry name" value="LEUCINE--TRNA LIGASE, MITOCHONDRIAL"/>
    <property type="match status" value="1"/>
</dbReference>
<dbReference type="PANTHER" id="PTHR43740">
    <property type="entry name" value="LEUCYL-TRNA SYNTHETASE"/>
    <property type="match status" value="1"/>
</dbReference>
<dbReference type="Pfam" id="PF08264">
    <property type="entry name" value="Anticodon_1"/>
    <property type="match status" value="1"/>
</dbReference>
<dbReference type="Pfam" id="PF00133">
    <property type="entry name" value="tRNA-synt_1"/>
    <property type="match status" value="2"/>
</dbReference>
<dbReference type="Pfam" id="PF13603">
    <property type="entry name" value="tRNA-synt_1_2"/>
    <property type="match status" value="1"/>
</dbReference>
<dbReference type="Pfam" id="PF09334">
    <property type="entry name" value="tRNA-synt_1g"/>
    <property type="match status" value="1"/>
</dbReference>
<dbReference type="PRINTS" id="PR00985">
    <property type="entry name" value="TRNASYNTHLEU"/>
</dbReference>
<dbReference type="SUPFAM" id="SSF47323">
    <property type="entry name" value="Anticodon-binding domain of a subclass of class I aminoacyl-tRNA synthetases"/>
    <property type="match status" value="1"/>
</dbReference>
<dbReference type="SUPFAM" id="SSF52374">
    <property type="entry name" value="Nucleotidylyl transferase"/>
    <property type="match status" value="1"/>
</dbReference>
<dbReference type="SUPFAM" id="SSF50677">
    <property type="entry name" value="ValRS/IleRS/LeuRS editing domain"/>
    <property type="match status" value="1"/>
</dbReference>
<dbReference type="PROSITE" id="PS00178">
    <property type="entry name" value="AA_TRNA_LIGASE_I"/>
    <property type="match status" value="1"/>
</dbReference>
<protein>
    <recommendedName>
        <fullName evidence="1">Leucine--tRNA ligase</fullName>
        <ecNumber evidence="1">6.1.1.4</ecNumber>
    </recommendedName>
    <alternativeName>
        <fullName evidence="1">Leucyl-tRNA synthetase</fullName>
        <shortName evidence="1">LeuRS</shortName>
    </alternativeName>
</protein>
<keyword id="KW-0030">Aminoacyl-tRNA synthetase</keyword>
<keyword id="KW-0067">ATP-binding</keyword>
<keyword id="KW-0963">Cytoplasm</keyword>
<keyword id="KW-0436">Ligase</keyword>
<keyword id="KW-0547">Nucleotide-binding</keyword>
<keyword id="KW-0648">Protein biosynthesis</keyword>
<organism>
    <name type="scientific">Marinobacter nauticus (strain ATCC 700491 / DSM 11845 / VT8)</name>
    <name type="common">Marinobacter aquaeolei</name>
    <dbReference type="NCBI Taxonomy" id="351348"/>
    <lineage>
        <taxon>Bacteria</taxon>
        <taxon>Pseudomonadati</taxon>
        <taxon>Pseudomonadota</taxon>
        <taxon>Gammaproteobacteria</taxon>
        <taxon>Pseudomonadales</taxon>
        <taxon>Marinobacteraceae</taxon>
        <taxon>Marinobacter</taxon>
    </lineage>
</organism>
<sequence length="861" mass="97230">MDEQYNPREVEQTARTFWETNETFKVKEEPGKPKYYCLSMFPYPSGKLHMGHVRNYTIGDVISRYQRMQGKNVMQPMGWDAFGLPAENAAIANKSAPAKWTRSNIDYMKNQLKQLGFGYDWSRELATCDPEYYRWEQWFFARLYEKGLVYKKMSTVNWDPVDQTVLANEQVVDGRGWRSGALVEQKKIPQWFIRITDYAEELLNDLEDMEGWPEQVKTMQRNWIGKSVGTELTFPLKEQEGGLTVYTTRPDTLMGVSYMAVAAEHPLAKAAAERHRDVAEFVDQCRNSKVAEAELATMEKKGIDTGFKAIHPLTQEEIPVWVANFVLMDYGTGALMAVPGHDERDHEFAVKYKLPIKQVIAPNDSRDIDIQEQAFTEKGVLVSSGKYSGLTSEEAFEEIADYLEAQGIGKRTVNYRLRDWGVSRQRYWGAPIPMMTLEDGTEMPVPDDQLPVRLPEDVEMDGVQSPIKADPEWCKTEYNGQPATLETDTFDTFMESSWYYARFCSPNYDKGMLDPAAANYWLPVDQYIGGIEHAILHLLYARFFHKLLRDVGLVNSSEPFKRLLTQGMVLAETYYRNEANGGKTWYNPADVTVERDGKGQVVRAVLKSDGEPVEIGGVTKMSKSKNNGIDPQAIIDQHGADTVRLFMMFAAPPEQSLEWSDSGVEGAHRFLKRLWRMVNEHTAGGDAPAVDPANLNGAQKDLRRKTHETIAKVSDDISRRLTFNTAIAAVMELLNEVGRLSDDEPQSRAVRQEALDTAVLVLSPIVPHICHNLWQALGHSDAVVDASWPVADESAMVRSEIEVVLQVNGKVRAKENVPADIGKADLEKLALENENVMRFTDGKTVRKVIVVPGKLVNVVAN</sequence>
<comment type="catalytic activity">
    <reaction evidence="1">
        <text>tRNA(Leu) + L-leucine + ATP = L-leucyl-tRNA(Leu) + AMP + diphosphate</text>
        <dbReference type="Rhea" id="RHEA:11688"/>
        <dbReference type="Rhea" id="RHEA-COMP:9613"/>
        <dbReference type="Rhea" id="RHEA-COMP:9622"/>
        <dbReference type="ChEBI" id="CHEBI:30616"/>
        <dbReference type="ChEBI" id="CHEBI:33019"/>
        <dbReference type="ChEBI" id="CHEBI:57427"/>
        <dbReference type="ChEBI" id="CHEBI:78442"/>
        <dbReference type="ChEBI" id="CHEBI:78494"/>
        <dbReference type="ChEBI" id="CHEBI:456215"/>
        <dbReference type="EC" id="6.1.1.4"/>
    </reaction>
</comment>
<comment type="subcellular location">
    <subcellularLocation>
        <location evidence="1">Cytoplasm</location>
    </subcellularLocation>
</comment>
<comment type="similarity">
    <text evidence="1">Belongs to the class-I aminoacyl-tRNA synthetase family.</text>
</comment>
<comment type="sequence caution" evidence="2">
    <conflict type="erroneous initiation">
        <sequence resource="EMBL-CDS" id="ABM19819"/>
    </conflict>
</comment>
<proteinExistence type="inferred from homology"/>
<evidence type="ECO:0000255" key="1">
    <source>
        <dbReference type="HAMAP-Rule" id="MF_00049"/>
    </source>
</evidence>
<evidence type="ECO:0000305" key="2"/>
<gene>
    <name evidence="1" type="primary">leuS</name>
    <name type="ordered locus">Maqu_2744</name>
</gene>